<accession>Q9VPU8</accession>
<accession>O02394</accession>
<evidence type="ECO:0000250" key="1">
    <source>
        <dbReference type="UniProtKB" id="Q8BGA5"/>
    </source>
</evidence>
<evidence type="ECO:0000255" key="2"/>
<evidence type="ECO:0000256" key="3">
    <source>
        <dbReference type="SAM" id="MobiDB-lite"/>
    </source>
</evidence>
<evidence type="ECO:0000269" key="4">
    <source>
    </source>
</evidence>
<evidence type="ECO:0000269" key="5">
    <source>
    </source>
</evidence>
<evidence type="ECO:0000269" key="6">
    <source>
    </source>
</evidence>
<evidence type="ECO:0000303" key="7">
    <source>
    </source>
</evidence>
<evidence type="ECO:0000305" key="8"/>
<evidence type="ECO:0000312" key="9">
    <source>
        <dbReference type="EMBL" id="AAF51440.1"/>
    </source>
</evidence>
<evidence type="ECO:0000312" key="10">
    <source>
        <dbReference type="EMBL" id="AAL39674.1"/>
    </source>
</evidence>
<evidence type="ECO:0000312" key="11">
    <source>
        <dbReference type="EMBL" id="CAB09659.1"/>
    </source>
</evidence>
<proteinExistence type="evidence at protein level"/>
<dbReference type="EMBL" id="Z96931">
    <property type="protein sequence ID" value="CAB09659.1"/>
    <property type="status" value="ALT_FRAME"/>
    <property type="molecule type" value="Genomic_DNA"/>
</dbReference>
<dbReference type="EMBL" id="AE014134">
    <property type="protein sequence ID" value="AAF51440.1"/>
    <property type="molecule type" value="Genomic_DNA"/>
</dbReference>
<dbReference type="EMBL" id="AY069529">
    <property type="protein sequence ID" value="AAL39674.1"/>
    <property type="molecule type" value="mRNA"/>
</dbReference>
<dbReference type="RefSeq" id="NP_477240.1">
    <property type="nucleotide sequence ID" value="NM_057892.4"/>
</dbReference>
<dbReference type="SMR" id="Q9VPU8"/>
<dbReference type="BioGRID" id="59523">
    <property type="interactions" value="7"/>
</dbReference>
<dbReference type="FunCoup" id="Q9VPU8">
    <property type="interactions" value="1757"/>
</dbReference>
<dbReference type="IntAct" id="Q9VPU8">
    <property type="interactions" value="3"/>
</dbReference>
<dbReference type="STRING" id="7227.FBpp0077694"/>
<dbReference type="PaxDb" id="7227-FBpp0077694"/>
<dbReference type="DNASU" id="33269"/>
<dbReference type="EnsemblMetazoa" id="FBtr0078030">
    <property type="protein sequence ID" value="FBpp0077694"/>
    <property type="gene ID" value="FBgn0020305"/>
</dbReference>
<dbReference type="GeneID" id="33269"/>
<dbReference type="KEGG" id="dme:Dmel_CG4258"/>
<dbReference type="UCSC" id="CG4258-RA">
    <property type="organism name" value="d. melanogaster"/>
</dbReference>
<dbReference type="AGR" id="FB:FBgn0020305"/>
<dbReference type="CTD" id="33269"/>
<dbReference type="FlyBase" id="FBgn0020305">
    <property type="gene designation" value="dbe"/>
</dbReference>
<dbReference type="VEuPathDB" id="VectorBase:FBgn0020305"/>
<dbReference type="eggNOG" id="KOG2874">
    <property type="taxonomic scope" value="Eukaryota"/>
</dbReference>
<dbReference type="GeneTree" id="ENSGT00390000018775"/>
<dbReference type="HOGENOM" id="CLU_040185_0_2_1"/>
<dbReference type="InParanoid" id="Q9VPU8"/>
<dbReference type="OMA" id="TPDIDKW"/>
<dbReference type="OrthoDB" id="441223at2759"/>
<dbReference type="PhylomeDB" id="Q9VPU8"/>
<dbReference type="Reactome" id="R-DME-6791226">
    <property type="pathway name" value="Major pathway of rRNA processing in the nucleolus and cytosol"/>
</dbReference>
<dbReference type="BioGRID-ORCS" id="33269">
    <property type="hits" value="0 hits in 1 CRISPR screen"/>
</dbReference>
<dbReference type="GenomeRNAi" id="33269"/>
<dbReference type="PRO" id="PR:Q9VPU8"/>
<dbReference type="Proteomes" id="UP000000803">
    <property type="component" value="Chromosome 2L"/>
</dbReference>
<dbReference type="Bgee" id="FBgn0020305">
    <property type="expression patterns" value="Expressed in adult enteroendocrine precursor cell in adult midgut (Drosophila) and 66 other cell types or tissues"/>
</dbReference>
<dbReference type="GO" id="GO:0005730">
    <property type="term" value="C:nucleolus"/>
    <property type="evidence" value="ECO:0000314"/>
    <property type="project" value="FlyBase"/>
</dbReference>
<dbReference type="GO" id="GO:0005654">
    <property type="term" value="C:nucleoplasm"/>
    <property type="evidence" value="ECO:0000314"/>
    <property type="project" value="FlyBase"/>
</dbReference>
<dbReference type="GO" id="GO:1990904">
    <property type="term" value="C:ribonucleoprotein complex"/>
    <property type="evidence" value="ECO:0000314"/>
    <property type="project" value="CAFA"/>
</dbReference>
<dbReference type="GO" id="GO:0032040">
    <property type="term" value="C:small-subunit processome"/>
    <property type="evidence" value="ECO:0000318"/>
    <property type="project" value="GO_Central"/>
</dbReference>
<dbReference type="GO" id="GO:0003723">
    <property type="term" value="F:RNA binding"/>
    <property type="evidence" value="ECO:0000314"/>
    <property type="project" value="CAFA"/>
</dbReference>
<dbReference type="GO" id="GO:0006364">
    <property type="term" value="P:rRNA processing"/>
    <property type="evidence" value="ECO:0000315"/>
    <property type="project" value="FlyBase"/>
</dbReference>
<dbReference type="CDD" id="cd22393">
    <property type="entry name" value="KH-I_KRR1_rpt1"/>
    <property type="match status" value="1"/>
</dbReference>
<dbReference type="CDD" id="cd22394">
    <property type="entry name" value="KH-I_KRR1_rpt2"/>
    <property type="match status" value="1"/>
</dbReference>
<dbReference type="DisProt" id="DP00540"/>
<dbReference type="FunFam" id="3.30.1370.10:FF:000011">
    <property type="entry name" value="KRR1 small subunit processome component"/>
    <property type="match status" value="1"/>
</dbReference>
<dbReference type="FunFam" id="3.30.1370.10:FF:000014">
    <property type="entry name" value="KRR1 small subunit processome component"/>
    <property type="match status" value="1"/>
</dbReference>
<dbReference type="Gene3D" id="3.30.1370.10">
    <property type="entry name" value="K Homology domain, type 1"/>
    <property type="match status" value="2"/>
</dbReference>
<dbReference type="InterPro" id="IPR004087">
    <property type="entry name" value="KH_dom"/>
</dbReference>
<dbReference type="InterPro" id="IPR036612">
    <property type="entry name" value="KH_dom_type_1_sf"/>
</dbReference>
<dbReference type="InterPro" id="IPR041174">
    <property type="entry name" value="KRR1-like_KH1"/>
</dbReference>
<dbReference type="InterPro" id="IPR048550">
    <property type="entry name" value="KRR1-like_KH1_euk"/>
</dbReference>
<dbReference type="InterPro" id="IPR048548">
    <property type="entry name" value="KRR1-like_KH2"/>
</dbReference>
<dbReference type="InterPro" id="IPR048549">
    <property type="entry name" value="KRR1-like_KH2_euk"/>
</dbReference>
<dbReference type="InterPro" id="IPR024166">
    <property type="entry name" value="rRNA_assembly_KRR1"/>
</dbReference>
<dbReference type="PANTHER" id="PTHR12581">
    <property type="entry name" value="HIV-1 REV BINDING PROTEIN 2, 3"/>
    <property type="match status" value="1"/>
</dbReference>
<dbReference type="PANTHER" id="PTHR12581:SF0">
    <property type="entry name" value="KRR1 SMALL SUBUNIT PROCESSOME COMPONENT HOMOLOG"/>
    <property type="match status" value="1"/>
</dbReference>
<dbReference type="Pfam" id="PF17903">
    <property type="entry name" value="KH_KRR1_1st"/>
    <property type="match status" value="1"/>
</dbReference>
<dbReference type="Pfam" id="PF21800">
    <property type="entry name" value="KH_KRR1_2nd"/>
    <property type="match status" value="1"/>
</dbReference>
<dbReference type="PIRSF" id="PIRSF006515">
    <property type="entry name" value="KRR1"/>
    <property type="match status" value="1"/>
</dbReference>
<dbReference type="SMART" id="SM00322">
    <property type="entry name" value="KH"/>
    <property type="match status" value="1"/>
</dbReference>
<dbReference type="SUPFAM" id="SSF54791">
    <property type="entry name" value="Eukaryotic type KH-domain (KH-domain type I)"/>
    <property type="match status" value="1"/>
</dbReference>
<comment type="function">
    <text evidence="5 6">Required for 40S ribosome biogenesis. Involved in nucleolar processing of pre-18S ribosomal RNA and ribosome assembly. Binds to RNA. Required for female germline development, cell viability during eye development and for survival of dividing cells and epithelial cells during early wing disk development.</text>
</comment>
<comment type="subunit">
    <text evidence="6">Monomer. Component of the ribosomal small subunit (SSU) processome.</text>
</comment>
<comment type="subcellular location">
    <subcellularLocation>
        <location evidence="5">Nucleus</location>
        <location evidence="5">Nucleolus</location>
    </subcellularLocation>
    <text evidence="5">Exogenous expression in embryos shows a predominant localization in nucleoplasm in some epidermal cells while most other cells show perinucleolar ring structure. In heat-shocked third instar larvae, localization varies among cells. In gut cells, some show localization in both nucleoplasm and nucleolus while in others localization is restricted to the center of the fibrillarin-positive part of the nucleolus, in the fibrillar center, where rRNA transcription occurs. On ectopic expression, a nuclear engrailed pattern is observed in embryonic epidermal cells.</text>
</comment>
<comment type="developmental stage">
    <text evidence="5">Expression is detected in nurse cells during oogenesis throughout stage 10A and persists through stage 14 with some expression in the anterior part of the oocyte. Expression is ubiquitously detected at all stages of embryogenesis. Observed in salivary gland cells from heat shocked transgenic third instar larvae.</text>
</comment>
<comment type="disruption phenotype">
    <text evidence="5">Homozygous mutant larvae show arrested development at the first instar stage as they fail to increase in size or develop into the second instar larval stage and die 2-3 days after hatching, without morphological defect. Mutant larvae show an overall reduction of most intermediate and mature rRNA as a consequence of abnormal pre-rRNA processing. Mutants show defects in rRNA processing and aberrant pre-rRNA species. An abnormal cleavage in the 3'-end of the pre-rRNA occurs within the presumptive 28S rRNA but it does not lead to accumulation of a truncated 28S rRNA.</text>
</comment>
<comment type="similarity">
    <text evidence="2">Belongs to the KRR1 family.</text>
</comment>
<comment type="sequence caution" evidence="8">
    <conflict type="frameshift">
        <sequence resource="EMBL-CDS" id="CAB09659"/>
    </conflict>
</comment>
<feature type="chain" id="PRO_0000415500" description="KRR1 small subunit processome component homolog">
    <location>
        <begin position="1"/>
        <end position="345"/>
    </location>
</feature>
<feature type="domain" description="KH" evidence="2">
    <location>
        <begin position="125"/>
        <end position="193"/>
    </location>
</feature>
<feature type="region of interest" description="Disordered" evidence="3">
    <location>
        <begin position="232"/>
        <end position="260"/>
    </location>
</feature>
<feature type="region of interest" description="Disordered" evidence="3">
    <location>
        <begin position="273"/>
        <end position="345"/>
    </location>
</feature>
<feature type="coiled-coil region" evidence="2 6">
    <location>
        <begin position="270"/>
        <end position="298"/>
    </location>
</feature>
<feature type="compositionally biased region" description="Basic residues" evidence="3">
    <location>
        <begin position="232"/>
        <end position="245"/>
    </location>
</feature>
<feature type="compositionally biased region" description="Basic and acidic residues" evidence="3">
    <location>
        <begin position="276"/>
        <end position="302"/>
    </location>
</feature>
<feature type="compositionally biased region" description="Basic and acidic residues" evidence="3">
    <location>
        <begin position="315"/>
        <end position="330"/>
    </location>
</feature>
<feature type="compositionally biased region" description="Basic residues" evidence="3">
    <location>
        <begin position="331"/>
        <end position="345"/>
    </location>
</feature>
<name>KRR1_DROME</name>
<protein>
    <recommendedName>
        <fullName evidence="1">KRR1 small subunit processome component homolog</fullName>
    </recommendedName>
    <alternativeName>
        <fullName evidence="1">KRR-R motif-containing protein 1</fullName>
    </alternativeName>
    <alternativeName>
        <fullName evidence="9">Protein dribble</fullName>
    </alternativeName>
</protein>
<gene>
    <name type="primary">dbe</name>
    <name evidence="7 11" type="synonym">dribble</name>
    <name type="ORF">CG4258</name>
</gene>
<organism>
    <name type="scientific">Drosophila melanogaster</name>
    <name type="common">Fruit fly</name>
    <dbReference type="NCBI Taxonomy" id="7227"/>
    <lineage>
        <taxon>Eukaryota</taxon>
        <taxon>Metazoa</taxon>
        <taxon>Ecdysozoa</taxon>
        <taxon>Arthropoda</taxon>
        <taxon>Hexapoda</taxon>
        <taxon>Insecta</taxon>
        <taxon>Pterygota</taxon>
        <taxon>Neoptera</taxon>
        <taxon>Endopterygota</taxon>
        <taxon>Diptera</taxon>
        <taxon>Brachycera</taxon>
        <taxon>Muscomorpha</taxon>
        <taxon>Ephydroidea</taxon>
        <taxon>Drosophilidae</taxon>
        <taxon>Drosophila</taxon>
        <taxon>Sophophora</taxon>
    </lineage>
</organism>
<keyword id="KW-0175">Coiled coil</keyword>
<keyword id="KW-0217">Developmental protein</keyword>
<keyword id="KW-0539">Nucleus</keyword>
<keyword id="KW-1185">Reference proteome</keyword>
<keyword id="KW-0687">Ribonucleoprotein</keyword>
<keyword id="KW-0690">Ribosome biogenesis</keyword>
<keyword id="KW-0694">RNA-binding</keyword>
<keyword id="KW-0698">rRNA processing</keyword>
<reference evidence="8 11" key="1">
    <citation type="journal article" date="2001" name="Mol. Biol. Cell">
        <title>Dribble, the Drosophila KRR1p homologue, is involved in rRNA processing.</title>
        <authorList>
            <person name="Chan H.Y."/>
            <person name="Brogna S."/>
            <person name="O'Kane C.J."/>
        </authorList>
    </citation>
    <scope>NUCLEOTIDE SEQUENCE [GENOMIC DNA]</scope>
    <scope>FUNCTION</scope>
    <scope>SUBCELLULAR LOCATION</scope>
    <scope>DEVELOPMENTAL STAGE</scope>
    <scope>DISRUPTION PHENOTYPE</scope>
</reference>
<reference evidence="9" key="2">
    <citation type="journal article" date="2000" name="Science">
        <title>The genome sequence of Drosophila melanogaster.</title>
        <authorList>
            <person name="Adams M.D."/>
            <person name="Celniker S.E."/>
            <person name="Holt R.A."/>
            <person name="Evans C.A."/>
            <person name="Gocayne J.D."/>
            <person name="Amanatides P.G."/>
            <person name="Scherer S.E."/>
            <person name="Li P.W."/>
            <person name="Hoskins R.A."/>
            <person name="Galle R.F."/>
            <person name="George R.A."/>
            <person name="Lewis S.E."/>
            <person name="Richards S."/>
            <person name="Ashburner M."/>
            <person name="Henderson S.N."/>
            <person name="Sutton G.G."/>
            <person name="Wortman J.R."/>
            <person name="Yandell M.D."/>
            <person name="Zhang Q."/>
            <person name="Chen L.X."/>
            <person name="Brandon R.C."/>
            <person name="Rogers Y.-H.C."/>
            <person name="Blazej R.G."/>
            <person name="Champe M."/>
            <person name="Pfeiffer B.D."/>
            <person name="Wan K.H."/>
            <person name="Doyle C."/>
            <person name="Baxter E.G."/>
            <person name="Helt G."/>
            <person name="Nelson C.R."/>
            <person name="Miklos G.L.G."/>
            <person name="Abril J.F."/>
            <person name="Agbayani A."/>
            <person name="An H.-J."/>
            <person name="Andrews-Pfannkoch C."/>
            <person name="Baldwin D."/>
            <person name="Ballew R.M."/>
            <person name="Basu A."/>
            <person name="Baxendale J."/>
            <person name="Bayraktaroglu L."/>
            <person name="Beasley E.M."/>
            <person name="Beeson K.Y."/>
            <person name="Benos P.V."/>
            <person name="Berman B.P."/>
            <person name="Bhandari D."/>
            <person name="Bolshakov S."/>
            <person name="Borkova D."/>
            <person name="Botchan M.R."/>
            <person name="Bouck J."/>
            <person name="Brokstein P."/>
            <person name="Brottier P."/>
            <person name="Burtis K.C."/>
            <person name="Busam D.A."/>
            <person name="Butler H."/>
            <person name="Cadieu E."/>
            <person name="Center A."/>
            <person name="Chandra I."/>
            <person name="Cherry J.M."/>
            <person name="Cawley S."/>
            <person name="Dahlke C."/>
            <person name="Davenport L.B."/>
            <person name="Davies P."/>
            <person name="de Pablos B."/>
            <person name="Delcher A."/>
            <person name="Deng Z."/>
            <person name="Mays A.D."/>
            <person name="Dew I."/>
            <person name="Dietz S.M."/>
            <person name="Dodson K."/>
            <person name="Doup L.E."/>
            <person name="Downes M."/>
            <person name="Dugan-Rocha S."/>
            <person name="Dunkov B.C."/>
            <person name="Dunn P."/>
            <person name="Durbin K.J."/>
            <person name="Evangelista C.C."/>
            <person name="Ferraz C."/>
            <person name="Ferriera S."/>
            <person name="Fleischmann W."/>
            <person name="Fosler C."/>
            <person name="Gabrielian A.E."/>
            <person name="Garg N.S."/>
            <person name="Gelbart W.M."/>
            <person name="Glasser K."/>
            <person name="Glodek A."/>
            <person name="Gong F."/>
            <person name="Gorrell J.H."/>
            <person name="Gu Z."/>
            <person name="Guan P."/>
            <person name="Harris M."/>
            <person name="Harris N.L."/>
            <person name="Harvey D.A."/>
            <person name="Heiman T.J."/>
            <person name="Hernandez J.R."/>
            <person name="Houck J."/>
            <person name="Hostin D."/>
            <person name="Houston K.A."/>
            <person name="Howland T.J."/>
            <person name="Wei M.-H."/>
            <person name="Ibegwam C."/>
            <person name="Jalali M."/>
            <person name="Kalush F."/>
            <person name="Karpen G.H."/>
            <person name="Ke Z."/>
            <person name="Kennison J.A."/>
            <person name="Ketchum K.A."/>
            <person name="Kimmel B.E."/>
            <person name="Kodira C.D."/>
            <person name="Kraft C.L."/>
            <person name="Kravitz S."/>
            <person name="Kulp D."/>
            <person name="Lai Z."/>
            <person name="Lasko P."/>
            <person name="Lei Y."/>
            <person name="Levitsky A.A."/>
            <person name="Li J.H."/>
            <person name="Li Z."/>
            <person name="Liang Y."/>
            <person name="Lin X."/>
            <person name="Liu X."/>
            <person name="Mattei B."/>
            <person name="McIntosh T.C."/>
            <person name="McLeod M.P."/>
            <person name="McPherson D."/>
            <person name="Merkulov G."/>
            <person name="Milshina N.V."/>
            <person name="Mobarry C."/>
            <person name="Morris J."/>
            <person name="Moshrefi A."/>
            <person name="Mount S.M."/>
            <person name="Moy M."/>
            <person name="Murphy B."/>
            <person name="Murphy L."/>
            <person name="Muzny D.M."/>
            <person name="Nelson D.L."/>
            <person name="Nelson D.R."/>
            <person name="Nelson K.A."/>
            <person name="Nixon K."/>
            <person name="Nusskern D.R."/>
            <person name="Pacleb J.M."/>
            <person name="Palazzolo M."/>
            <person name="Pittman G.S."/>
            <person name="Pan S."/>
            <person name="Pollard J."/>
            <person name="Puri V."/>
            <person name="Reese M.G."/>
            <person name="Reinert K."/>
            <person name="Remington K."/>
            <person name="Saunders R.D.C."/>
            <person name="Scheeler F."/>
            <person name="Shen H."/>
            <person name="Shue B.C."/>
            <person name="Siden-Kiamos I."/>
            <person name="Simpson M."/>
            <person name="Skupski M.P."/>
            <person name="Smith T.J."/>
            <person name="Spier E."/>
            <person name="Spradling A.C."/>
            <person name="Stapleton M."/>
            <person name="Strong R."/>
            <person name="Sun E."/>
            <person name="Svirskas R."/>
            <person name="Tector C."/>
            <person name="Turner R."/>
            <person name="Venter E."/>
            <person name="Wang A.H."/>
            <person name="Wang X."/>
            <person name="Wang Z.-Y."/>
            <person name="Wassarman D.A."/>
            <person name="Weinstock G.M."/>
            <person name="Weissenbach J."/>
            <person name="Williams S.M."/>
            <person name="Woodage T."/>
            <person name="Worley K.C."/>
            <person name="Wu D."/>
            <person name="Yang S."/>
            <person name="Yao Q.A."/>
            <person name="Ye J."/>
            <person name="Yeh R.-F."/>
            <person name="Zaveri J.S."/>
            <person name="Zhan M."/>
            <person name="Zhang G."/>
            <person name="Zhao Q."/>
            <person name="Zheng L."/>
            <person name="Zheng X.H."/>
            <person name="Zhong F.N."/>
            <person name="Zhong W."/>
            <person name="Zhou X."/>
            <person name="Zhu S.C."/>
            <person name="Zhu X."/>
            <person name="Smith H.O."/>
            <person name="Gibbs R.A."/>
            <person name="Myers E.W."/>
            <person name="Rubin G.M."/>
            <person name="Venter J.C."/>
        </authorList>
    </citation>
    <scope>NUCLEOTIDE SEQUENCE [LARGE SCALE GENOMIC DNA]</scope>
    <source>
        <strain evidence="4">Berkeley</strain>
    </source>
</reference>
<reference evidence="9" key="3">
    <citation type="journal article" date="2002" name="Genome Biol.">
        <title>Annotation of the Drosophila melanogaster euchromatic genome: a systematic review.</title>
        <authorList>
            <person name="Misra S."/>
            <person name="Crosby M.A."/>
            <person name="Mungall C.J."/>
            <person name="Matthews B.B."/>
            <person name="Campbell K.S."/>
            <person name="Hradecky P."/>
            <person name="Huang Y."/>
            <person name="Kaminker J.S."/>
            <person name="Millburn G.H."/>
            <person name="Prochnik S.E."/>
            <person name="Smith C.D."/>
            <person name="Tupy J.L."/>
            <person name="Whitfield E.J."/>
            <person name="Bayraktaroglu L."/>
            <person name="Berman B.P."/>
            <person name="Bettencourt B.R."/>
            <person name="Celniker S.E."/>
            <person name="de Grey A.D.N.J."/>
            <person name="Drysdale R.A."/>
            <person name="Harris N.L."/>
            <person name="Richter J."/>
            <person name="Russo S."/>
            <person name="Schroeder A.J."/>
            <person name="Shu S.Q."/>
            <person name="Stapleton M."/>
            <person name="Yamada C."/>
            <person name="Ashburner M."/>
            <person name="Gelbart W.M."/>
            <person name="Rubin G.M."/>
            <person name="Lewis S.E."/>
        </authorList>
    </citation>
    <scope>GENOME REANNOTATION</scope>
    <source>
        <strain>Berkeley</strain>
    </source>
</reference>
<reference evidence="10" key="4">
    <citation type="submission" date="2003-01" db="EMBL/GenBank/DDBJ databases">
        <authorList>
            <person name="Stapleton M."/>
            <person name="Brokstein P."/>
            <person name="Hong L."/>
            <person name="Agbayani A."/>
            <person name="Carlson J."/>
            <person name="Champe M."/>
            <person name="Chavez C."/>
            <person name="Dorsett V."/>
            <person name="Dresnek D."/>
            <person name="Farfan D."/>
            <person name="Frise E."/>
            <person name="George R."/>
            <person name="Gonzalez M."/>
            <person name="Guarin H."/>
            <person name="Kronmiller B."/>
            <person name="Li P."/>
            <person name="Liao G."/>
            <person name="Miranda A."/>
            <person name="Mungall C.J."/>
            <person name="Nunoo J."/>
            <person name="Pacleb J."/>
            <person name="Paragas V."/>
            <person name="Park S."/>
            <person name="Patel S."/>
            <person name="Phouanenavong S."/>
            <person name="Wan K."/>
            <person name="Yu C."/>
            <person name="Lewis S.E."/>
            <person name="Rubin G.M."/>
            <person name="Celniker S.E."/>
        </authorList>
    </citation>
    <scope>NUCLEOTIDE SEQUENCE [LARGE SCALE MRNA]</scope>
    <source>
        <strain>Berkeley</strain>
        <tissue>Embryo</tissue>
    </source>
</reference>
<reference evidence="8" key="5">
    <citation type="journal article" date="2006" name="Biochem. Biophys. Res. Commun.">
        <title>Biophysical characterisation reveals structural disorder in the nucleolar protein, Dribble.</title>
        <authorList>
            <person name="Yiu C.P."/>
            <person name="Beavil R.L."/>
            <person name="Chan H.Y."/>
        </authorList>
    </citation>
    <scope>FUNCTION</scope>
    <scope>SUBUNIT</scope>
    <scope>IDENTIFICATION BY MASS SPECTROMETRY</scope>
</reference>
<sequence>MSESEAEETKISTEPVDNAWSMKIPAFRQEDNPHGMVEESSFATLFPKYRERYLKEVWPLVEQCLAEHHLKAELDLMEGSMVVKTSRKTWDPYIIIKARDMIKLMARSVPFEQAKRVLQDDIGCDIIKIGNLVHKKEKFVKRRQRLIGPNGATLKSIELLTDCYVLVQGNTVSALGPYKGLQQVRDIVLETMNNVHPIYNIKALMIKRELMKDPRLANEDWSRFLPKFKNKNISKRKQPKVKKQKKEYTPFPPSQPESKVDKQLASGEYFLNQEQKQAKRNQERTEKQKEAAKRQDERRNKDFVPPTEESAASSRKKEDGSSSSKVDVKALKAKLIKANKKARSS</sequence>